<comment type="function">
    <text evidence="1">Catalyzes the oxidation of 5,10-methylenetetrahydrofolate to 5,10-methenyltetrahydrofolate and then the hydrolysis of 5,10-methenyltetrahydrofolate to 10-formyltetrahydrofolate.</text>
</comment>
<comment type="catalytic activity">
    <reaction evidence="1">
        <text>(6R)-5,10-methylene-5,6,7,8-tetrahydrofolate + NADP(+) = (6R)-5,10-methenyltetrahydrofolate + NADPH</text>
        <dbReference type="Rhea" id="RHEA:22812"/>
        <dbReference type="ChEBI" id="CHEBI:15636"/>
        <dbReference type="ChEBI" id="CHEBI:57455"/>
        <dbReference type="ChEBI" id="CHEBI:57783"/>
        <dbReference type="ChEBI" id="CHEBI:58349"/>
        <dbReference type="EC" id="1.5.1.5"/>
    </reaction>
</comment>
<comment type="catalytic activity">
    <reaction evidence="1">
        <text>(6R)-5,10-methenyltetrahydrofolate + H2O = (6R)-10-formyltetrahydrofolate + H(+)</text>
        <dbReference type="Rhea" id="RHEA:23700"/>
        <dbReference type="ChEBI" id="CHEBI:15377"/>
        <dbReference type="ChEBI" id="CHEBI:15378"/>
        <dbReference type="ChEBI" id="CHEBI:57455"/>
        <dbReference type="ChEBI" id="CHEBI:195366"/>
        <dbReference type="EC" id="3.5.4.9"/>
    </reaction>
</comment>
<comment type="pathway">
    <text evidence="1">One-carbon metabolism; tetrahydrofolate interconversion.</text>
</comment>
<comment type="subunit">
    <text evidence="1">Homodimer.</text>
</comment>
<comment type="similarity">
    <text evidence="1">Belongs to the tetrahydrofolate dehydrogenase/cyclohydrolase family.</text>
</comment>
<evidence type="ECO:0000255" key="1">
    <source>
        <dbReference type="HAMAP-Rule" id="MF_01576"/>
    </source>
</evidence>
<name>FOLD2_RHIWR</name>
<keyword id="KW-0028">Amino-acid biosynthesis</keyword>
<keyword id="KW-0368">Histidine biosynthesis</keyword>
<keyword id="KW-0378">Hydrolase</keyword>
<keyword id="KW-0486">Methionine biosynthesis</keyword>
<keyword id="KW-0511">Multifunctional enzyme</keyword>
<keyword id="KW-0521">NADP</keyword>
<keyword id="KW-0554">One-carbon metabolism</keyword>
<keyword id="KW-0560">Oxidoreductase</keyword>
<keyword id="KW-0658">Purine biosynthesis</keyword>
<keyword id="KW-1185">Reference proteome</keyword>
<feature type="chain" id="PRO_0000340600" description="Bifunctional protein FolD 2">
    <location>
        <begin position="1"/>
        <end position="297"/>
    </location>
</feature>
<feature type="binding site" evidence="1">
    <location>
        <begin position="177"/>
        <end position="179"/>
    </location>
    <ligand>
        <name>NADP(+)</name>
        <dbReference type="ChEBI" id="CHEBI:58349"/>
    </ligand>
</feature>
<feature type="binding site" evidence="1">
    <location>
        <position position="202"/>
    </location>
    <ligand>
        <name>NADP(+)</name>
        <dbReference type="ChEBI" id="CHEBI:58349"/>
    </ligand>
</feature>
<feature type="binding site" evidence="1">
    <location>
        <position position="243"/>
    </location>
    <ligand>
        <name>NADP(+)</name>
        <dbReference type="ChEBI" id="CHEBI:58349"/>
    </ligand>
</feature>
<organism>
    <name type="scientific">Rhizorhabdus wittichii (strain DSM 6014 / CCUG 31198 / JCM 15750 / NBRC 105917 / EY 4224 / RW1)</name>
    <name type="common">Sphingomonas wittichii</name>
    <dbReference type="NCBI Taxonomy" id="392499"/>
    <lineage>
        <taxon>Bacteria</taxon>
        <taxon>Pseudomonadati</taxon>
        <taxon>Pseudomonadota</taxon>
        <taxon>Alphaproteobacteria</taxon>
        <taxon>Sphingomonadales</taxon>
        <taxon>Sphingomonadaceae</taxon>
        <taxon>Rhizorhabdus</taxon>
    </lineage>
</organism>
<protein>
    <recommendedName>
        <fullName evidence="1">Bifunctional protein FolD 2</fullName>
    </recommendedName>
    <domain>
        <recommendedName>
            <fullName evidence="1">Methylenetetrahydrofolate dehydrogenase</fullName>
            <ecNumber evidence="1">1.5.1.5</ecNumber>
        </recommendedName>
    </domain>
    <domain>
        <recommendedName>
            <fullName evidence="1">Methenyltetrahydrofolate cyclohydrolase</fullName>
            <ecNumber evidence="1">3.5.4.9</ecNumber>
        </recommendedName>
    </domain>
</protein>
<dbReference type="EC" id="1.5.1.5" evidence="1"/>
<dbReference type="EC" id="3.5.4.9" evidence="1"/>
<dbReference type="EMBL" id="CP000699">
    <property type="protein sequence ID" value="ABQ68423.1"/>
    <property type="molecule type" value="Genomic_DNA"/>
</dbReference>
<dbReference type="SMR" id="A5V807"/>
<dbReference type="STRING" id="392499.Swit_2064"/>
<dbReference type="PaxDb" id="392499-Swit_2064"/>
<dbReference type="KEGG" id="swi:Swit_2064"/>
<dbReference type="eggNOG" id="COG0190">
    <property type="taxonomic scope" value="Bacteria"/>
</dbReference>
<dbReference type="HOGENOM" id="CLU_034045_2_1_5"/>
<dbReference type="OrthoDB" id="9803580at2"/>
<dbReference type="UniPathway" id="UPA00193"/>
<dbReference type="Proteomes" id="UP000001989">
    <property type="component" value="Chromosome"/>
</dbReference>
<dbReference type="GO" id="GO:0005829">
    <property type="term" value="C:cytosol"/>
    <property type="evidence" value="ECO:0007669"/>
    <property type="project" value="TreeGrafter"/>
</dbReference>
<dbReference type="GO" id="GO:0004477">
    <property type="term" value="F:methenyltetrahydrofolate cyclohydrolase activity"/>
    <property type="evidence" value="ECO:0007669"/>
    <property type="project" value="UniProtKB-UniRule"/>
</dbReference>
<dbReference type="GO" id="GO:0004488">
    <property type="term" value="F:methylenetetrahydrofolate dehydrogenase (NADP+) activity"/>
    <property type="evidence" value="ECO:0007669"/>
    <property type="project" value="UniProtKB-UniRule"/>
</dbReference>
<dbReference type="GO" id="GO:0000105">
    <property type="term" value="P:L-histidine biosynthetic process"/>
    <property type="evidence" value="ECO:0007669"/>
    <property type="project" value="UniProtKB-KW"/>
</dbReference>
<dbReference type="GO" id="GO:0009086">
    <property type="term" value="P:methionine biosynthetic process"/>
    <property type="evidence" value="ECO:0007669"/>
    <property type="project" value="UniProtKB-KW"/>
</dbReference>
<dbReference type="GO" id="GO:0006164">
    <property type="term" value="P:purine nucleotide biosynthetic process"/>
    <property type="evidence" value="ECO:0007669"/>
    <property type="project" value="UniProtKB-KW"/>
</dbReference>
<dbReference type="GO" id="GO:0035999">
    <property type="term" value="P:tetrahydrofolate interconversion"/>
    <property type="evidence" value="ECO:0007669"/>
    <property type="project" value="UniProtKB-UniRule"/>
</dbReference>
<dbReference type="CDD" id="cd01080">
    <property type="entry name" value="NAD_bind_m-THF_DH_Cyclohyd"/>
    <property type="match status" value="1"/>
</dbReference>
<dbReference type="FunFam" id="3.40.50.720:FF:000006">
    <property type="entry name" value="Bifunctional protein FolD"/>
    <property type="match status" value="1"/>
</dbReference>
<dbReference type="FunFam" id="3.40.50.10860:FF:000005">
    <property type="entry name" value="C-1-tetrahydrofolate synthase, cytoplasmic, putative"/>
    <property type="match status" value="1"/>
</dbReference>
<dbReference type="Gene3D" id="3.40.50.10860">
    <property type="entry name" value="Leucine Dehydrogenase, chain A, domain 1"/>
    <property type="match status" value="1"/>
</dbReference>
<dbReference type="Gene3D" id="3.40.50.720">
    <property type="entry name" value="NAD(P)-binding Rossmann-like Domain"/>
    <property type="match status" value="1"/>
</dbReference>
<dbReference type="HAMAP" id="MF_01576">
    <property type="entry name" value="THF_DHG_CYH"/>
    <property type="match status" value="1"/>
</dbReference>
<dbReference type="InterPro" id="IPR046346">
    <property type="entry name" value="Aminoacid_DH-like_N_sf"/>
</dbReference>
<dbReference type="InterPro" id="IPR036291">
    <property type="entry name" value="NAD(P)-bd_dom_sf"/>
</dbReference>
<dbReference type="InterPro" id="IPR000672">
    <property type="entry name" value="THF_DH/CycHdrlase"/>
</dbReference>
<dbReference type="InterPro" id="IPR020630">
    <property type="entry name" value="THF_DH/CycHdrlase_cat_dom"/>
</dbReference>
<dbReference type="InterPro" id="IPR020867">
    <property type="entry name" value="THF_DH/CycHdrlase_CS"/>
</dbReference>
<dbReference type="InterPro" id="IPR020631">
    <property type="entry name" value="THF_DH/CycHdrlase_NAD-bd_dom"/>
</dbReference>
<dbReference type="NCBIfam" id="NF010783">
    <property type="entry name" value="PRK14186.1"/>
    <property type="match status" value="1"/>
</dbReference>
<dbReference type="NCBIfam" id="NF010785">
    <property type="entry name" value="PRK14188.1"/>
    <property type="match status" value="1"/>
</dbReference>
<dbReference type="PANTHER" id="PTHR48099:SF5">
    <property type="entry name" value="C-1-TETRAHYDROFOLATE SYNTHASE, CYTOPLASMIC"/>
    <property type="match status" value="1"/>
</dbReference>
<dbReference type="PANTHER" id="PTHR48099">
    <property type="entry name" value="C-1-TETRAHYDROFOLATE SYNTHASE, CYTOPLASMIC-RELATED"/>
    <property type="match status" value="1"/>
</dbReference>
<dbReference type="Pfam" id="PF00763">
    <property type="entry name" value="THF_DHG_CYH"/>
    <property type="match status" value="1"/>
</dbReference>
<dbReference type="Pfam" id="PF02882">
    <property type="entry name" value="THF_DHG_CYH_C"/>
    <property type="match status" value="1"/>
</dbReference>
<dbReference type="PRINTS" id="PR00085">
    <property type="entry name" value="THFDHDRGNASE"/>
</dbReference>
<dbReference type="SUPFAM" id="SSF53223">
    <property type="entry name" value="Aminoacid dehydrogenase-like, N-terminal domain"/>
    <property type="match status" value="1"/>
</dbReference>
<dbReference type="SUPFAM" id="SSF51735">
    <property type="entry name" value="NAD(P)-binding Rossmann-fold domains"/>
    <property type="match status" value="1"/>
</dbReference>
<dbReference type="PROSITE" id="PS00767">
    <property type="entry name" value="THF_DHG_CYH_2"/>
    <property type="match status" value="1"/>
</dbReference>
<sequence length="297" mass="30943">MAPSHAAHDSAATAHRIDGRAIARSLDERTAAAVRAIVARDGAPPGLAVVLVGNDPASEVYVGRKIEACRRVGILSFEHRLPAQTTQDALLTLIARLNADPTIHGILVQVPLPSHIDDGMVLSAIDPAKDVDGFHPVNVGRLSTGTGGLVPCTPLGVMMLLDSVIDDMKGMDAVVIGKSNIVGKPIAMLLLEREATVTVTHIETRGLPDIVRKADIIVAAAGAPRLVKGYWVKEGAVIIDVGITRLPGEGGKTRLVGDVAFDEVQHARAVTPVPGGVGPMTIACLLANTVKAAEMRG</sequence>
<gene>
    <name evidence="1" type="primary">folD2</name>
    <name type="ordered locus">Swit_2064</name>
</gene>
<accession>A5V807</accession>
<proteinExistence type="inferred from homology"/>
<reference key="1">
    <citation type="journal article" date="2010" name="J. Bacteriol.">
        <title>Genome sequence of the dioxin-mineralizing bacterium Sphingomonas wittichii RW1.</title>
        <authorList>
            <person name="Miller T.R."/>
            <person name="Delcher A.L."/>
            <person name="Salzberg S.L."/>
            <person name="Saunders E."/>
            <person name="Detter J.C."/>
            <person name="Halden R.U."/>
        </authorList>
    </citation>
    <scope>NUCLEOTIDE SEQUENCE [LARGE SCALE GENOMIC DNA]</scope>
    <source>
        <strain>DSM 6014 / CCUG 31198 / JCM 15750 / NBRC 105917 / EY 4224 / RW1</strain>
    </source>
</reference>